<name>INH_PSESM</name>
<proteinExistence type="inferred from homology"/>
<feature type="signal peptide" evidence="2">
    <location>
        <begin position="1"/>
        <end position="26"/>
    </location>
</feature>
<feature type="chain" id="PRO_0000026719" description="Alkaline proteinase inhibitor">
    <location>
        <begin position="27"/>
        <end position="127"/>
    </location>
</feature>
<feature type="disulfide bond" evidence="1">
    <location>
        <begin position="53"/>
        <end position="70"/>
    </location>
</feature>
<evidence type="ECO:0000250" key="1"/>
<evidence type="ECO:0000255" key="2"/>
<evidence type="ECO:0000305" key="3"/>
<gene>
    <name type="primary">inh</name>
    <name type="ordered locus">PSPTO_3331</name>
</gene>
<organism>
    <name type="scientific">Pseudomonas syringae pv. tomato (strain ATCC BAA-871 / DC3000)</name>
    <dbReference type="NCBI Taxonomy" id="223283"/>
    <lineage>
        <taxon>Bacteria</taxon>
        <taxon>Pseudomonadati</taxon>
        <taxon>Pseudomonadota</taxon>
        <taxon>Gammaproteobacteria</taxon>
        <taxon>Pseudomonadales</taxon>
        <taxon>Pseudomonadaceae</taxon>
        <taxon>Pseudomonas</taxon>
    </lineage>
</organism>
<sequence>MNINYFVRIVPVAVVLLVGISGASMAMSLKLPNPAELSGQWRLSLQGKADDACELQLNTEAPQLTGDVACAAKWLHEPPAGWFPTPDGLALTDNQGNRLIHLNRMDEQTYEARLPGGELLILGRFAD</sequence>
<reference key="1">
    <citation type="journal article" date="2003" name="Proc. Natl. Acad. Sci. U.S.A.">
        <title>The complete genome sequence of the Arabidopsis and tomato pathogen Pseudomonas syringae pv. tomato DC3000.</title>
        <authorList>
            <person name="Buell C.R."/>
            <person name="Joardar V."/>
            <person name="Lindeberg M."/>
            <person name="Selengut J."/>
            <person name="Paulsen I.T."/>
            <person name="Gwinn M.L."/>
            <person name="Dodson R.J."/>
            <person name="DeBoy R.T."/>
            <person name="Durkin A.S."/>
            <person name="Kolonay J.F."/>
            <person name="Madupu R."/>
            <person name="Daugherty S.C."/>
            <person name="Brinkac L.M."/>
            <person name="Beanan M.J."/>
            <person name="Haft D.H."/>
            <person name="Nelson W.C."/>
            <person name="Davidsen T.M."/>
            <person name="Zafar N."/>
            <person name="Zhou L."/>
            <person name="Liu J."/>
            <person name="Yuan Q."/>
            <person name="Khouri H.M."/>
            <person name="Fedorova N.B."/>
            <person name="Tran B."/>
            <person name="Russell D."/>
            <person name="Berry K.J."/>
            <person name="Utterback T.R."/>
            <person name="Van Aken S.E."/>
            <person name="Feldblyum T.V."/>
            <person name="D'Ascenzo M."/>
            <person name="Deng W.-L."/>
            <person name="Ramos A.R."/>
            <person name="Alfano J.R."/>
            <person name="Cartinhour S."/>
            <person name="Chatterjee A.K."/>
            <person name="Delaney T.P."/>
            <person name="Lazarowitz S.G."/>
            <person name="Martin G.B."/>
            <person name="Schneider D.J."/>
            <person name="Tang X."/>
            <person name="Bender C.L."/>
            <person name="White O."/>
            <person name="Fraser C.M."/>
            <person name="Collmer A."/>
        </authorList>
    </citation>
    <scope>NUCLEOTIDE SEQUENCE [LARGE SCALE GENOMIC DNA]</scope>
    <source>
        <strain>ATCC BAA-871 / DC3000</strain>
    </source>
</reference>
<comment type="function">
    <text evidence="1">Inhibitor of the alkaline protease.</text>
</comment>
<comment type="subcellular location">
    <subcellularLocation>
        <location evidence="1">Periplasm</location>
    </subcellularLocation>
</comment>
<comment type="similarity">
    <text evidence="3">Belongs to the protease inhibitor I38 family.</text>
</comment>
<accession>Q87ZU3</accession>
<protein>
    <recommendedName>
        <fullName>Alkaline proteinase inhibitor</fullName>
    </recommendedName>
</protein>
<dbReference type="EMBL" id="AE016853">
    <property type="protein sequence ID" value="AAO56809.1"/>
    <property type="molecule type" value="Genomic_DNA"/>
</dbReference>
<dbReference type="RefSeq" id="NP_793114.1">
    <property type="nucleotide sequence ID" value="NC_004578.1"/>
</dbReference>
<dbReference type="RefSeq" id="WP_005767369.1">
    <property type="nucleotide sequence ID" value="NC_004578.1"/>
</dbReference>
<dbReference type="SMR" id="Q87ZU3"/>
<dbReference type="STRING" id="223283.PSPTO_3331"/>
<dbReference type="MEROPS" id="I38.001"/>
<dbReference type="GeneID" id="1184989"/>
<dbReference type="KEGG" id="pst:PSPTO_3331"/>
<dbReference type="PATRIC" id="fig|223283.9.peg.3409"/>
<dbReference type="eggNOG" id="ENOG50334WG">
    <property type="taxonomic scope" value="Bacteria"/>
</dbReference>
<dbReference type="HOGENOM" id="CLU_155270_1_0_6"/>
<dbReference type="OrthoDB" id="6996810at2"/>
<dbReference type="PHI-base" id="PHI:3120"/>
<dbReference type="Proteomes" id="UP000002515">
    <property type="component" value="Chromosome"/>
</dbReference>
<dbReference type="GO" id="GO:0042597">
    <property type="term" value="C:periplasmic space"/>
    <property type="evidence" value="ECO:0007669"/>
    <property type="project" value="UniProtKB-SubCell"/>
</dbReference>
<dbReference type="GO" id="GO:0008191">
    <property type="term" value="F:metalloendopeptidase inhibitor activity"/>
    <property type="evidence" value="ECO:0007669"/>
    <property type="project" value="InterPro"/>
</dbReference>
<dbReference type="Gene3D" id="2.40.128.10">
    <property type="match status" value="1"/>
</dbReference>
<dbReference type="InterPro" id="IPR022815">
    <property type="entry name" value="Inh"/>
</dbReference>
<dbReference type="InterPro" id="IPR021140">
    <property type="entry name" value="Inh/Omp19"/>
</dbReference>
<dbReference type="InterPro" id="IPR016085">
    <property type="entry name" value="Protease_inh_b-brl_dom"/>
</dbReference>
<dbReference type="Pfam" id="PF02974">
    <property type="entry name" value="Inh"/>
    <property type="match status" value="1"/>
</dbReference>
<dbReference type="PRINTS" id="PR01274">
    <property type="entry name" value="MPTASEINHBTR"/>
</dbReference>
<dbReference type="SUPFAM" id="SSF50882">
    <property type="entry name" value="beta-Barrel protease inhibitors"/>
    <property type="match status" value="1"/>
</dbReference>
<keyword id="KW-1015">Disulfide bond</keyword>
<keyword id="KW-0481">Metalloenzyme inhibitor</keyword>
<keyword id="KW-0483">Metalloprotease inhibitor</keyword>
<keyword id="KW-0574">Periplasm</keyword>
<keyword id="KW-0646">Protease inhibitor</keyword>
<keyword id="KW-1185">Reference proteome</keyword>
<keyword id="KW-0732">Signal</keyword>